<proteinExistence type="inferred from homology"/>
<accession>Q89GV4</accession>
<sequence length="556" mass="60807">MNRRLDNDRTIRAPRGRDISAKSWLTEAPLRMLMNNLDPDVAERPSELVVYGGIGRAARDWESFDRITAALRKLEDDETLLIQSGKPVGVFRTHADAPRVLIANSNIVPHWATLDHFNELDRKGLMMYGQMTAGSWIYIGSQGIVQGTYETFVEVGRRHYGGSLAGKWILTAGLGGMGGAQPLAATMAGASMLAVECQPSRIEMRLRTGYLDRQAATLDEALAIMEESAKTKKAISVGLLGNAAEIFPELVRRGVKPDIVTDQTSAHDPINGYLPKGWTLADWEAKRASDPKAVERASKTSMVEHVQAMLDFHAQGIPTLDYGNNIRQMAQDMGLKNAFDFPGFVPAYIRPLFCRGVGPFRWAALSGDPEDIFKTDAKVKELMPDDKHLHNWLDMARERIKFQGLPARICWVGLGDRHRLGLAFNEMVARGELKAPVVIGRDHLDSGSVASPNRETEAMKDGSDAVSDWPLLNALLNCASGATWVSLHHGGGVGIGYSQHAGMVIVADGTPEAAKRIARVLWNDPATGVMRHADAGYDIAIDCARDKGLDLPSLSK</sequence>
<protein>
    <recommendedName>
        <fullName evidence="1">Urocanate hydratase</fullName>
        <shortName evidence="1">Urocanase</shortName>
        <ecNumber evidence="1">4.2.1.49</ecNumber>
    </recommendedName>
    <alternativeName>
        <fullName evidence="1">Imidazolonepropionate hydrolase</fullName>
    </alternativeName>
</protein>
<evidence type="ECO:0000255" key="1">
    <source>
        <dbReference type="HAMAP-Rule" id="MF_00577"/>
    </source>
</evidence>
<reference key="1">
    <citation type="journal article" date="2002" name="DNA Res.">
        <title>Complete genomic sequence of nitrogen-fixing symbiotic bacterium Bradyrhizobium japonicum USDA110.</title>
        <authorList>
            <person name="Kaneko T."/>
            <person name="Nakamura Y."/>
            <person name="Sato S."/>
            <person name="Minamisawa K."/>
            <person name="Uchiumi T."/>
            <person name="Sasamoto S."/>
            <person name="Watanabe A."/>
            <person name="Idesawa K."/>
            <person name="Iriguchi M."/>
            <person name="Kawashima K."/>
            <person name="Kohara M."/>
            <person name="Matsumoto M."/>
            <person name="Shimpo S."/>
            <person name="Tsuruoka H."/>
            <person name="Wada T."/>
            <person name="Yamada M."/>
            <person name="Tabata S."/>
        </authorList>
    </citation>
    <scope>NUCLEOTIDE SEQUENCE [LARGE SCALE GENOMIC DNA]</scope>
    <source>
        <strain>JCM 10833 / BCRC 13528 / IAM 13628 / NBRC 14792 / USDA 110</strain>
    </source>
</reference>
<feature type="chain" id="PRO_0000207335" description="Urocanate hydratase">
    <location>
        <begin position="1"/>
        <end position="556"/>
    </location>
</feature>
<feature type="active site" evidence="1">
    <location>
        <position position="410"/>
    </location>
</feature>
<feature type="binding site" evidence="1">
    <location>
        <begin position="52"/>
        <end position="53"/>
    </location>
    <ligand>
        <name>NAD(+)</name>
        <dbReference type="ChEBI" id="CHEBI:57540"/>
    </ligand>
</feature>
<feature type="binding site" evidence="1">
    <location>
        <position position="130"/>
    </location>
    <ligand>
        <name>NAD(+)</name>
        <dbReference type="ChEBI" id="CHEBI:57540"/>
    </ligand>
</feature>
<feature type="binding site" evidence="1">
    <location>
        <begin position="176"/>
        <end position="178"/>
    </location>
    <ligand>
        <name>NAD(+)</name>
        <dbReference type="ChEBI" id="CHEBI:57540"/>
    </ligand>
</feature>
<feature type="binding site" evidence="1">
    <location>
        <position position="196"/>
    </location>
    <ligand>
        <name>NAD(+)</name>
        <dbReference type="ChEBI" id="CHEBI:57540"/>
    </ligand>
</feature>
<feature type="binding site" evidence="1">
    <location>
        <position position="201"/>
    </location>
    <ligand>
        <name>NAD(+)</name>
        <dbReference type="ChEBI" id="CHEBI:57540"/>
    </ligand>
</feature>
<feature type="binding site" evidence="1">
    <location>
        <begin position="242"/>
        <end position="243"/>
    </location>
    <ligand>
        <name>NAD(+)</name>
        <dbReference type="ChEBI" id="CHEBI:57540"/>
    </ligand>
</feature>
<feature type="binding site" evidence="1">
    <location>
        <begin position="263"/>
        <end position="267"/>
    </location>
    <ligand>
        <name>NAD(+)</name>
        <dbReference type="ChEBI" id="CHEBI:57540"/>
    </ligand>
</feature>
<feature type="binding site" evidence="1">
    <location>
        <begin position="273"/>
        <end position="274"/>
    </location>
    <ligand>
        <name>NAD(+)</name>
        <dbReference type="ChEBI" id="CHEBI:57540"/>
    </ligand>
</feature>
<feature type="binding site" evidence="1">
    <location>
        <position position="322"/>
    </location>
    <ligand>
        <name>NAD(+)</name>
        <dbReference type="ChEBI" id="CHEBI:57540"/>
    </ligand>
</feature>
<feature type="binding site" evidence="1">
    <location>
        <position position="492"/>
    </location>
    <ligand>
        <name>NAD(+)</name>
        <dbReference type="ChEBI" id="CHEBI:57540"/>
    </ligand>
</feature>
<organism>
    <name type="scientific">Bradyrhizobium diazoefficiens (strain JCM 10833 / BCRC 13528 / IAM 13628 / NBRC 14792 / USDA 110)</name>
    <dbReference type="NCBI Taxonomy" id="224911"/>
    <lineage>
        <taxon>Bacteria</taxon>
        <taxon>Pseudomonadati</taxon>
        <taxon>Pseudomonadota</taxon>
        <taxon>Alphaproteobacteria</taxon>
        <taxon>Hyphomicrobiales</taxon>
        <taxon>Nitrobacteraceae</taxon>
        <taxon>Bradyrhizobium</taxon>
    </lineage>
</organism>
<name>HUTU_BRADU</name>
<comment type="function">
    <text evidence="1">Catalyzes the conversion of urocanate to 4-imidazolone-5-propionate.</text>
</comment>
<comment type="catalytic activity">
    <reaction evidence="1">
        <text>4-imidazolone-5-propanoate = trans-urocanate + H2O</text>
        <dbReference type="Rhea" id="RHEA:13101"/>
        <dbReference type="ChEBI" id="CHEBI:15377"/>
        <dbReference type="ChEBI" id="CHEBI:17771"/>
        <dbReference type="ChEBI" id="CHEBI:77893"/>
        <dbReference type="EC" id="4.2.1.49"/>
    </reaction>
</comment>
<comment type="cofactor">
    <cofactor evidence="1">
        <name>NAD(+)</name>
        <dbReference type="ChEBI" id="CHEBI:57540"/>
    </cofactor>
    <text evidence="1">Binds 1 NAD(+) per subunit.</text>
</comment>
<comment type="pathway">
    <text evidence="1">Amino-acid degradation; L-histidine degradation into L-glutamate; N-formimidoyl-L-glutamate from L-histidine: step 2/3.</text>
</comment>
<comment type="subcellular location">
    <subcellularLocation>
        <location evidence="1">Cytoplasm</location>
    </subcellularLocation>
</comment>
<comment type="similarity">
    <text evidence="1">Belongs to the urocanase family.</text>
</comment>
<dbReference type="EC" id="4.2.1.49" evidence="1"/>
<dbReference type="EMBL" id="BA000040">
    <property type="protein sequence ID" value="BAC51506.1"/>
    <property type="molecule type" value="Genomic_DNA"/>
</dbReference>
<dbReference type="RefSeq" id="NP_772881.1">
    <property type="nucleotide sequence ID" value="NC_004463.1"/>
</dbReference>
<dbReference type="RefSeq" id="WP_011088981.1">
    <property type="nucleotide sequence ID" value="NC_004463.1"/>
</dbReference>
<dbReference type="SMR" id="Q89GV4"/>
<dbReference type="STRING" id="224911.AAV28_28760"/>
<dbReference type="EnsemblBacteria" id="BAC51506">
    <property type="protein sequence ID" value="BAC51506"/>
    <property type="gene ID" value="BAC51506"/>
</dbReference>
<dbReference type="GeneID" id="46493229"/>
<dbReference type="KEGG" id="bja:bll6241"/>
<dbReference type="PATRIC" id="fig|224911.44.peg.6214"/>
<dbReference type="eggNOG" id="COG2987">
    <property type="taxonomic scope" value="Bacteria"/>
</dbReference>
<dbReference type="HOGENOM" id="CLU_018868_0_1_5"/>
<dbReference type="InParanoid" id="Q89GV4"/>
<dbReference type="OrthoDB" id="9764874at2"/>
<dbReference type="PhylomeDB" id="Q89GV4"/>
<dbReference type="UniPathway" id="UPA00379">
    <property type="reaction ID" value="UER00550"/>
</dbReference>
<dbReference type="Proteomes" id="UP000002526">
    <property type="component" value="Chromosome"/>
</dbReference>
<dbReference type="GO" id="GO:0005737">
    <property type="term" value="C:cytoplasm"/>
    <property type="evidence" value="ECO:0007669"/>
    <property type="project" value="UniProtKB-SubCell"/>
</dbReference>
<dbReference type="GO" id="GO:0016153">
    <property type="term" value="F:urocanate hydratase activity"/>
    <property type="evidence" value="ECO:0000318"/>
    <property type="project" value="GO_Central"/>
</dbReference>
<dbReference type="GO" id="GO:0006548">
    <property type="term" value="P:L-histidine catabolic process"/>
    <property type="evidence" value="ECO:0000318"/>
    <property type="project" value="GO_Central"/>
</dbReference>
<dbReference type="GO" id="GO:0019556">
    <property type="term" value="P:L-histidine catabolic process to glutamate and formamide"/>
    <property type="evidence" value="ECO:0007669"/>
    <property type="project" value="UniProtKB-UniPathway"/>
</dbReference>
<dbReference type="GO" id="GO:0019557">
    <property type="term" value="P:L-histidine catabolic process to glutamate and formate"/>
    <property type="evidence" value="ECO:0007669"/>
    <property type="project" value="UniProtKB-UniPathway"/>
</dbReference>
<dbReference type="FunFam" id="3.40.50.10730:FF:000001">
    <property type="entry name" value="Urocanate hydratase"/>
    <property type="match status" value="1"/>
</dbReference>
<dbReference type="Gene3D" id="3.40.50.10730">
    <property type="entry name" value="Urocanase like domains"/>
    <property type="match status" value="1"/>
</dbReference>
<dbReference type="Gene3D" id="3.40.1770.10">
    <property type="entry name" value="Urocanase superfamily"/>
    <property type="match status" value="1"/>
</dbReference>
<dbReference type="HAMAP" id="MF_00577">
    <property type="entry name" value="HutU"/>
    <property type="match status" value="1"/>
</dbReference>
<dbReference type="InterPro" id="IPR055351">
    <property type="entry name" value="Urocanase"/>
</dbReference>
<dbReference type="InterPro" id="IPR023637">
    <property type="entry name" value="Urocanase-like"/>
</dbReference>
<dbReference type="InterPro" id="IPR035401">
    <property type="entry name" value="Urocanase_C"/>
</dbReference>
<dbReference type="InterPro" id="IPR038364">
    <property type="entry name" value="Urocanase_central_sf"/>
</dbReference>
<dbReference type="InterPro" id="IPR023636">
    <property type="entry name" value="Urocanase_CS"/>
</dbReference>
<dbReference type="InterPro" id="IPR035400">
    <property type="entry name" value="Urocanase_N"/>
</dbReference>
<dbReference type="InterPro" id="IPR035085">
    <property type="entry name" value="Urocanase_Rossmann-like"/>
</dbReference>
<dbReference type="InterPro" id="IPR036190">
    <property type="entry name" value="Urocanase_sf"/>
</dbReference>
<dbReference type="NCBIfam" id="TIGR01228">
    <property type="entry name" value="hutU"/>
    <property type="match status" value="1"/>
</dbReference>
<dbReference type="NCBIfam" id="NF003820">
    <property type="entry name" value="PRK05414.1"/>
    <property type="match status" value="1"/>
</dbReference>
<dbReference type="PANTHER" id="PTHR12216">
    <property type="entry name" value="UROCANATE HYDRATASE"/>
    <property type="match status" value="1"/>
</dbReference>
<dbReference type="PANTHER" id="PTHR12216:SF4">
    <property type="entry name" value="UROCANATE HYDRATASE"/>
    <property type="match status" value="1"/>
</dbReference>
<dbReference type="Pfam" id="PF01175">
    <property type="entry name" value="Urocanase"/>
    <property type="match status" value="1"/>
</dbReference>
<dbReference type="Pfam" id="PF17392">
    <property type="entry name" value="Urocanase_C"/>
    <property type="match status" value="1"/>
</dbReference>
<dbReference type="Pfam" id="PF17391">
    <property type="entry name" value="Urocanase_N"/>
    <property type="match status" value="1"/>
</dbReference>
<dbReference type="PIRSF" id="PIRSF001423">
    <property type="entry name" value="Urocanate_hydrat"/>
    <property type="match status" value="1"/>
</dbReference>
<dbReference type="SUPFAM" id="SSF111326">
    <property type="entry name" value="Urocanase"/>
    <property type="match status" value="1"/>
</dbReference>
<dbReference type="PROSITE" id="PS01233">
    <property type="entry name" value="UROCANASE"/>
    <property type="match status" value="1"/>
</dbReference>
<keyword id="KW-0963">Cytoplasm</keyword>
<keyword id="KW-0369">Histidine metabolism</keyword>
<keyword id="KW-0456">Lyase</keyword>
<keyword id="KW-0520">NAD</keyword>
<keyword id="KW-1185">Reference proteome</keyword>
<gene>
    <name evidence="1" type="primary">hutU</name>
    <name type="ordered locus">bll6241</name>
</gene>